<gene>
    <name type="primary">DDAH1</name>
</gene>
<reference key="1">
    <citation type="submission" date="2007-07" db="EMBL/GenBank/DDBJ databases">
        <authorList>
            <consortium name="NIH - Mammalian Gene Collection (MGC) project"/>
        </authorList>
    </citation>
    <scope>NUCLEOTIDE SEQUENCE [LARGE SCALE MRNA]</scope>
    <source>
        <strain>Hereford</strain>
        <tissue>Hypothalamus</tissue>
    </source>
</reference>
<reference key="2">
    <citation type="journal article" date="2003" name="J. Biol. Chem.">
        <title>Zn(II)-free dimethylargininase-1 (DDAH-1) is inhibited upon specific CysS-nitrosylation.</title>
        <authorList>
            <person name="Knipp M."/>
            <person name="Braun O."/>
            <person name="Gehrig P.M."/>
            <person name="Sack R."/>
            <person name="Vasak M."/>
        </authorList>
    </citation>
    <scope>PROTEIN SEQUENCE OF 2-285</scope>
    <scope>MASS SPECTROMETRY</scope>
    <scope>ACETYLATION AT ALA-2</scope>
    <scope>S-NITROSYLATION AT CYS-222 AND CYS-274</scope>
    <scope>ACTIVITY REGULATION</scope>
    <scope>3D-STRUCTURE MODELING</scope>
    <source>
        <tissue>Brain</tissue>
    </source>
</reference>
<reference key="3">
    <citation type="journal article" date="1998" name="Biochemistry">
        <title>Characterization of dimethylargininase from bovine brain: evidence for a zinc binding site.</title>
        <authorList>
            <person name="Bogumil R."/>
            <person name="Knipp M."/>
            <person name="Fundel S.M."/>
            <person name="Vasak M."/>
        </authorList>
    </citation>
    <scope>PROTEIN SEQUENCE OF 2-12</scope>
    <scope>CATALYTIC ACTIVITY</scope>
    <scope>ACTIVITY REGULATION</scope>
    <scope>ZINC BINDING</scope>
    <scope>SUBUNIT</scope>
    <scope>TISSUE SPECIFICITY</scope>
    <scope>CIRCULAR DICHROISM</scope>
    <source>
        <tissue>Brain</tissue>
    </source>
</reference>
<reference key="4">
    <citation type="journal article" date="1996" name="FEBS Lett.">
        <title>Isolation and characterization of a novel monomeric zinc- and heme-containing protein from bovine brain.</title>
        <authorList>
            <person name="Fundel S.M."/>
            <person name="Pountney D.L."/>
            <person name="Bogumil R."/>
            <person name="Gehrig P.M."/>
            <person name="Hasler D.W."/>
            <person name="Faller P."/>
            <person name="Vasak M."/>
        </authorList>
    </citation>
    <scope>PROTEIN SEQUENCE OF 46-57; 105-119 AND 180-200</scope>
    <scope>CHARACTERIZATION</scope>
    <source>
        <tissue>Brain</tissue>
    </source>
</reference>
<reference key="5">
    <citation type="journal article" date="2001" name="J. Biol. Chem.">
        <title>Structural and functional characterization of the Zn(II) site in dimethylargininase-1 (DDAH-1) from bovine brain. Zn(II) release activates DDAH-1.</title>
        <authorList>
            <person name="Knipp M."/>
            <person name="Charnock J.M."/>
            <person name="Garner C.D."/>
            <person name="Vasak M."/>
        </authorList>
    </citation>
    <scope>BIOPHYSICOCHEMICAL PROPERTIES</scope>
    <scope>ZINC BINDING</scope>
    <scope>ACTIVITY REGULATION</scope>
</reference>
<reference key="6">
    <citation type="journal article" date="2006" name="Structure">
        <title>Structure of the mammalian NOS regulator dimethylarginine dimethylaminohydrolase: a basis for the design of specific inhibitors.</title>
        <authorList>
            <person name="Frey D."/>
            <person name="Braun O."/>
            <person name="Briand C."/>
            <person name="Vasak M."/>
            <person name="Gruetter M.G."/>
        </authorList>
    </citation>
    <scope>X-RAY CRYSTALLOGRAPHY (1.08 ANGSTROMS) IN COMPLEX WITH SUBSTRATE ANALOG; INHIBITOR AND ZINC IONS</scope>
</reference>
<name>DDAH1_BOVIN</name>
<keyword id="KW-0002">3D-structure</keyword>
<keyword id="KW-0007">Acetylation</keyword>
<keyword id="KW-0903">Direct protein sequencing</keyword>
<keyword id="KW-0378">Hydrolase</keyword>
<keyword id="KW-0479">Metal-binding</keyword>
<keyword id="KW-1185">Reference proteome</keyword>
<keyword id="KW-0702">S-nitrosylation</keyword>
<keyword id="KW-0862">Zinc</keyword>
<protein>
    <recommendedName>
        <fullName>N(G),N(G)-dimethylarginine dimethylaminohydrolase 1</fullName>
        <shortName>DDAH-1</shortName>
        <shortName>Dimethylarginine dimethylaminohydrolase 1</shortName>
        <ecNumber>3.5.3.18</ecNumber>
    </recommendedName>
    <alternativeName>
        <fullName>DDAHI</fullName>
    </alternativeName>
    <alternativeName>
        <fullName>Dimethylargininase-1</fullName>
    </alternativeName>
</protein>
<feature type="initiator methionine" description="Removed" evidence="3 5">
    <location>
        <position position="1"/>
    </location>
</feature>
<feature type="chain" id="PRO_0000171117" description="N(G),N(G)-dimethylarginine dimethylaminohydrolase 1">
    <location>
        <begin position="2"/>
        <end position="285"/>
    </location>
</feature>
<feature type="active site" description="Proton donor" evidence="1">
    <location>
        <position position="173"/>
    </location>
</feature>
<feature type="active site" description="Nucleophile" evidence="1">
    <location>
        <position position="274"/>
    </location>
</feature>
<feature type="binding site">
    <location>
        <position position="30"/>
    </location>
    <ligand>
        <name>substrate</name>
    </ligand>
</feature>
<feature type="binding site">
    <location>
        <position position="73"/>
    </location>
    <ligand>
        <name>substrate</name>
    </ligand>
</feature>
<feature type="binding site">
    <location>
        <position position="78"/>
    </location>
    <ligand>
        <name>substrate</name>
    </ligand>
</feature>
<feature type="binding site">
    <location>
        <position position="79"/>
    </location>
    <ligand>
        <name>substrate</name>
    </ligand>
</feature>
<feature type="binding site">
    <location>
        <position position="98"/>
    </location>
    <ligand>
        <name>substrate</name>
    </ligand>
</feature>
<feature type="binding site">
    <location>
        <position position="145"/>
    </location>
    <ligand>
        <name>substrate</name>
    </ligand>
</feature>
<feature type="binding site">
    <location>
        <position position="268"/>
    </location>
    <ligand>
        <name>substrate</name>
    </ligand>
</feature>
<feature type="binding site">
    <location>
        <position position="274"/>
    </location>
    <ligand>
        <name>Zn(2+)</name>
        <dbReference type="ChEBI" id="CHEBI:29105"/>
    </ligand>
</feature>
<feature type="modified residue" description="N-acetylalanine" evidence="3">
    <location>
        <position position="2"/>
    </location>
</feature>
<feature type="modified residue" description="S-nitrosocysteine" evidence="3">
    <location>
        <position position="222"/>
    </location>
</feature>
<feature type="modified residue" description="S-nitrosocysteine" evidence="3">
    <location>
        <position position="274"/>
    </location>
</feature>
<feature type="strand" evidence="9">
    <location>
        <begin position="14"/>
        <end position="19"/>
    </location>
</feature>
<feature type="helix" evidence="9">
    <location>
        <begin position="25"/>
        <end position="28"/>
    </location>
</feature>
<feature type="turn" evidence="10">
    <location>
        <begin position="30"/>
        <end position="32"/>
    </location>
</feature>
<feature type="strand" evidence="10">
    <location>
        <begin position="34"/>
        <end position="36"/>
    </location>
</feature>
<feature type="helix" evidence="9">
    <location>
        <begin position="40"/>
        <end position="55"/>
    </location>
</feature>
<feature type="turn" evidence="9">
    <location>
        <begin position="56"/>
        <end position="58"/>
    </location>
</feature>
<feature type="strand" evidence="9">
    <location>
        <begin position="61"/>
        <end position="65"/>
    </location>
</feature>
<feature type="turn" evidence="9">
    <location>
        <begin position="72"/>
        <end position="75"/>
    </location>
</feature>
<feature type="helix" evidence="9">
    <location>
        <begin position="77"/>
        <end position="80"/>
    </location>
</feature>
<feature type="strand" evidence="9">
    <location>
        <begin position="81"/>
        <end position="84"/>
    </location>
</feature>
<feature type="strand" evidence="9">
    <location>
        <begin position="87"/>
        <end position="90"/>
    </location>
</feature>
<feature type="helix" evidence="9">
    <location>
        <begin position="96"/>
        <end position="101"/>
    </location>
</feature>
<feature type="helix" evidence="9">
    <location>
        <begin position="102"/>
        <end position="111"/>
    </location>
</feature>
<feature type="strand" evidence="9">
    <location>
        <begin position="115"/>
        <end position="118"/>
    </location>
</feature>
<feature type="helix" evidence="9">
    <location>
        <begin position="128"/>
        <end position="130"/>
    </location>
</feature>
<feature type="strand" evidence="9">
    <location>
        <begin position="131"/>
        <end position="133"/>
    </location>
</feature>
<feature type="strand" evidence="9">
    <location>
        <begin position="135"/>
        <end position="145"/>
    </location>
</feature>
<feature type="helix" evidence="9">
    <location>
        <begin position="148"/>
        <end position="157"/>
    </location>
</feature>
<feature type="turn" evidence="11">
    <location>
        <begin position="158"/>
        <end position="160"/>
    </location>
</feature>
<feature type="strand" evidence="9">
    <location>
        <begin position="161"/>
        <end position="167"/>
    </location>
</feature>
<feature type="strand" evidence="9">
    <location>
        <begin position="170"/>
        <end position="173"/>
    </location>
</feature>
<feature type="helix" evidence="9">
    <location>
        <begin position="174"/>
        <end position="176"/>
    </location>
</feature>
<feature type="strand" evidence="9">
    <location>
        <begin position="177"/>
        <end position="182"/>
    </location>
</feature>
<feature type="strand" evidence="9">
    <location>
        <begin position="185"/>
        <end position="189"/>
    </location>
</feature>
<feature type="helix" evidence="9">
    <location>
        <begin position="192"/>
        <end position="204"/>
    </location>
</feature>
<feature type="strand" evidence="9">
    <location>
        <begin position="210"/>
        <end position="216"/>
    </location>
</feature>
<feature type="helix" evidence="9">
    <location>
        <begin position="217"/>
        <end position="220"/>
    </location>
</feature>
<feature type="strand" evidence="9">
    <location>
        <begin position="223"/>
        <end position="227"/>
    </location>
</feature>
<feature type="turn" evidence="9">
    <location>
        <begin position="228"/>
        <end position="230"/>
    </location>
</feature>
<feature type="strand" evidence="9">
    <location>
        <begin position="231"/>
        <end position="236"/>
    </location>
</feature>
<feature type="turn" evidence="9">
    <location>
        <begin position="239"/>
        <end position="241"/>
    </location>
</feature>
<feature type="helix" evidence="9">
    <location>
        <begin position="243"/>
        <end position="249"/>
    </location>
</feature>
<feature type="strand" evidence="9">
    <location>
        <begin position="255"/>
        <end position="259"/>
    </location>
</feature>
<feature type="helix" evidence="9">
    <location>
        <begin position="263"/>
        <end position="266"/>
    </location>
</feature>
<feature type="turn" evidence="9">
    <location>
        <begin position="267"/>
        <end position="269"/>
    </location>
</feature>
<feature type="helix" evidence="8">
    <location>
        <begin position="273"/>
        <end position="275"/>
    </location>
</feature>
<feature type="strand" evidence="9">
    <location>
        <begin position="277"/>
        <end position="279"/>
    </location>
</feature>
<evidence type="ECO:0000250" key="1"/>
<evidence type="ECO:0000269" key="2">
    <source>
    </source>
</evidence>
<evidence type="ECO:0000269" key="3">
    <source>
    </source>
</evidence>
<evidence type="ECO:0000269" key="4">
    <source>
    </source>
</evidence>
<evidence type="ECO:0000269" key="5">
    <source>
    </source>
</evidence>
<evidence type="ECO:0000305" key="6"/>
<evidence type="ECO:0000305" key="7">
    <source>
    </source>
</evidence>
<evidence type="ECO:0007829" key="8">
    <source>
        <dbReference type="PDB" id="2C6Z"/>
    </source>
</evidence>
<evidence type="ECO:0007829" key="9">
    <source>
        <dbReference type="PDB" id="2CI1"/>
    </source>
</evidence>
<evidence type="ECO:0007829" key="10">
    <source>
        <dbReference type="PDB" id="2CI4"/>
    </source>
</evidence>
<evidence type="ECO:0007829" key="11">
    <source>
        <dbReference type="PDB" id="2CI7"/>
    </source>
</evidence>
<accession>P56965</accession>
<accession>A6QQU7</accession>
<accession>P81020</accession>
<sequence>MASLGHPATFGRATHVVVRALPESLAQQALRRTKGDEVDFARAERQHQLYVGVLGSKLGLQVVQLPADESLPDCVFVEDVAVVCEETALITRPGAPSRRKEADMMKEALEKLQLNIVEMKDENATLDGGDVLFTGREFFVGLSKRTNQRGAEILADTFKDYAVSTVPVVDALHLKSFCSMAGPNLIAIGSSESAQKALKIMQQMSDHRYDKLTVPDDTAANCIYLNIPSKGHVLLHRTPEEYPESAKVYEKLKDHMLIPVSNSELEKVDGLLTCSSVLINKKVDS</sequence>
<dbReference type="EC" id="3.5.3.18"/>
<dbReference type="EMBL" id="BC149998">
    <property type="protein sequence ID" value="AAI49999.1"/>
    <property type="molecule type" value="mRNA"/>
</dbReference>
<dbReference type="PIR" id="S74156">
    <property type="entry name" value="S74156"/>
</dbReference>
<dbReference type="RefSeq" id="NP_001095671.1">
    <property type="nucleotide sequence ID" value="NM_001102201.2"/>
</dbReference>
<dbReference type="PDB" id="2C6Z">
    <property type="method" value="X-ray"/>
    <property type="resolution" value="1.20 A"/>
    <property type="chains" value="A=2-285"/>
</dbReference>
<dbReference type="PDB" id="2CI1">
    <property type="method" value="X-ray"/>
    <property type="resolution" value="1.08 A"/>
    <property type="chains" value="A=8-282"/>
</dbReference>
<dbReference type="PDB" id="2CI3">
    <property type="method" value="X-ray"/>
    <property type="resolution" value="1.70 A"/>
    <property type="chains" value="A=2-285"/>
</dbReference>
<dbReference type="PDB" id="2CI4">
    <property type="method" value="X-ray"/>
    <property type="resolution" value="1.70 A"/>
    <property type="chains" value="A=2-285"/>
</dbReference>
<dbReference type="PDB" id="2CI5">
    <property type="method" value="X-ray"/>
    <property type="resolution" value="1.79 A"/>
    <property type="chains" value="A/B=2-285"/>
</dbReference>
<dbReference type="PDB" id="2CI6">
    <property type="method" value="X-ray"/>
    <property type="resolution" value="2.00 A"/>
    <property type="chains" value="A=2-285"/>
</dbReference>
<dbReference type="PDB" id="2CI7">
    <property type="method" value="X-ray"/>
    <property type="resolution" value="1.60 A"/>
    <property type="chains" value="A=2-285"/>
</dbReference>
<dbReference type="PDBsum" id="2C6Z"/>
<dbReference type="PDBsum" id="2CI1"/>
<dbReference type="PDBsum" id="2CI3"/>
<dbReference type="PDBsum" id="2CI4"/>
<dbReference type="PDBsum" id="2CI5"/>
<dbReference type="PDBsum" id="2CI6"/>
<dbReference type="PDBsum" id="2CI7"/>
<dbReference type="SMR" id="P56965"/>
<dbReference type="BioGRID" id="193961">
    <property type="interactions" value="1"/>
</dbReference>
<dbReference type="FunCoup" id="P56965">
    <property type="interactions" value="346"/>
</dbReference>
<dbReference type="STRING" id="9913.ENSBTAP00000046157"/>
<dbReference type="ChEMBL" id="CHEMBL6081"/>
<dbReference type="iPTMnet" id="P56965"/>
<dbReference type="PaxDb" id="9913-ENSBTAP00000046157"/>
<dbReference type="PeptideAtlas" id="P56965"/>
<dbReference type="GeneID" id="537391"/>
<dbReference type="KEGG" id="bta:537391"/>
<dbReference type="CTD" id="23576"/>
<dbReference type="VEuPathDB" id="HostDB:ENSBTAG00000034776"/>
<dbReference type="eggNOG" id="ENOG502QWPA">
    <property type="taxonomic scope" value="Eukaryota"/>
</dbReference>
<dbReference type="HOGENOM" id="CLU_067923_0_0_1"/>
<dbReference type="InParanoid" id="P56965"/>
<dbReference type="OMA" id="RKEADMM"/>
<dbReference type="OrthoDB" id="10016839at2759"/>
<dbReference type="TreeFam" id="TF314737"/>
<dbReference type="BRENDA" id="3.5.3.18">
    <property type="organism ID" value="908"/>
</dbReference>
<dbReference type="Reactome" id="R-BTA-203615">
    <property type="pathway name" value="eNOS activation"/>
</dbReference>
<dbReference type="SABIO-RK" id="P56965"/>
<dbReference type="EvolutionaryTrace" id="P56965"/>
<dbReference type="PRO" id="PR:P56965"/>
<dbReference type="Proteomes" id="UP000009136">
    <property type="component" value="Chromosome 3"/>
</dbReference>
<dbReference type="Bgee" id="ENSBTAG00000034776">
    <property type="expression patterns" value="Expressed in temporal cortex and 99 other cell types or tissues"/>
</dbReference>
<dbReference type="GO" id="GO:0016597">
    <property type="term" value="F:amino acid binding"/>
    <property type="evidence" value="ECO:0000318"/>
    <property type="project" value="GO_Central"/>
</dbReference>
<dbReference type="GO" id="GO:0016403">
    <property type="term" value="F:dimethylargininase activity"/>
    <property type="evidence" value="ECO:0000314"/>
    <property type="project" value="MGI"/>
</dbReference>
<dbReference type="GO" id="GO:0008270">
    <property type="term" value="F:zinc ion binding"/>
    <property type="evidence" value="ECO:0000314"/>
    <property type="project" value="MGI"/>
</dbReference>
<dbReference type="GO" id="GO:0006525">
    <property type="term" value="P:arginine metabolic process"/>
    <property type="evidence" value="ECO:0000318"/>
    <property type="project" value="GO_Central"/>
</dbReference>
<dbReference type="GO" id="GO:0000052">
    <property type="term" value="P:citrulline metabolic process"/>
    <property type="evidence" value="ECO:0000250"/>
    <property type="project" value="UniProtKB"/>
</dbReference>
<dbReference type="GO" id="GO:0006809">
    <property type="term" value="P:nitric oxide biosynthetic process"/>
    <property type="evidence" value="ECO:0000314"/>
    <property type="project" value="MGI"/>
</dbReference>
<dbReference type="GO" id="GO:0045429">
    <property type="term" value="P:positive regulation of nitric oxide biosynthetic process"/>
    <property type="evidence" value="ECO:0000314"/>
    <property type="project" value="BHF-UCL"/>
</dbReference>
<dbReference type="GO" id="GO:0017014">
    <property type="term" value="P:protein nitrosylation"/>
    <property type="evidence" value="ECO:0000314"/>
    <property type="project" value="MGI"/>
</dbReference>
<dbReference type="FunFam" id="3.75.10.10:FF:000004">
    <property type="entry name" value="N(G),N(G)-dimethylarginine dimethylaminohydrolase 1"/>
    <property type="match status" value="1"/>
</dbReference>
<dbReference type="Gene3D" id="3.75.10.10">
    <property type="entry name" value="L-arginine/glycine Amidinotransferase, Chain A"/>
    <property type="match status" value="1"/>
</dbReference>
<dbReference type="InterPro" id="IPR033199">
    <property type="entry name" value="DDAH-like"/>
</dbReference>
<dbReference type="PANTHER" id="PTHR12737">
    <property type="entry name" value="DIMETHYLARGININE DIMETHYLAMINOHYDROLASE"/>
    <property type="match status" value="1"/>
</dbReference>
<dbReference type="PANTHER" id="PTHR12737:SF17">
    <property type="entry name" value="N(G),N(G)-DIMETHYLARGININE DIMETHYLAMINOHYDROLASE 1"/>
    <property type="match status" value="1"/>
</dbReference>
<dbReference type="Pfam" id="PF02274">
    <property type="entry name" value="ADI"/>
    <property type="match status" value="1"/>
</dbReference>
<dbReference type="SUPFAM" id="SSF55909">
    <property type="entry name" value="Pentein"/>
    <property type="match status" value="1"/>
</dbReference>
<comment type="function">
    <text>Hydrolyzes N(G),N(G)-dimethyl-L-arginine (ADMA) and N(G)-monomethyl-L-arginine (MMA) which act as inhibitors of NOS. Has therefore a role in the regulation of nitric oxide generation.</text>
</comment>
<comment type="catalytic activity">
    <reaction evidence="5">
        <text>N(omega),N(omega)-dimethyl-L-arginine + H2O = dimethylamine + L-citrulline</text>
        <dbReference type="Rhea" id="RHEA:17305"/>
        <dbReference type="ChEBI" id="CHEBI:15377"/>
        <dbReference type="ChEBI" id="CHEBI:57743"/>
        <dbReference type="ChEBI" id="CHEBI:58040"/>
        <dbReference type="ChEBI" id="CHEBI:58326"/>
        <dbReference type="EC" id="3.5.3.18"/>
    </reaction>
</comment>
<comment type="catalytic activity">
    <reaction evidence="5">
        <text>N(omega)-methyl-L-arginine + H2O = L-citrulline + methylamine</text>
        <dbReference type="Rhea" id="RHEA:25173"/>
        <dbReference type="ChEBI" id="CHEBI:15377"/>
        <dbReference type="ChEBI" id="CHEBI:57743"/>
        <dbReference type="ChEBI" id="CHEBI:59338"/>
        <dbReference type="ChEBI" id="CHEBI:114953"/>
        <dbReference type="EC" id="3.5.3.18"/>
    </reaction>
</comment>
<comment type="activity regulation">
    <text evidence="2 3 5">Copurifies with a tightly bound zinc ion. Activated by release of zinc. His and other agents that promote the release of bound zinc ions activate the enzyme (in vitro). Inhibited by S-nitrosylation. Zinc protects the protein against S-nitrosylation.</text>
</comment>
<comment type="biophysicochemical properties">
    <phDependence>
        <text evidence="2">Optimum pH is 7.8.</text>
    </phDependence>
</comment>
<comment type="subunit">
    <text evidence="4 5">Monomer.</text>
</comment>
<comment type="tissue specificity">
    <text evidence="5">Widely distributed, highest concentrations found in brain, brain cortex and kidney (at protein level).</text>
</comment>
<comment type="mass spectrometry"/>
<comment type="similarity">
    <text evidence="6">Belongs to the DDAH family.</text>
</comment>
<comment type="caution">
    <text evidence="7">Was originally thought to be a heme protein, but this was later shown to be an artifact.</text>
</comment>
<proteinExistence type="evidence at protein level"/>
<organism>
    <name type="scientific">Bos taurus</name>
    <name type="common">Bovine</name>
    <dbReference type="NCBI Taxonomy" id="9913"/>
    <lineage>
        <taxon>Eukaryota</taxon>
        <taxon>Metazoa</taxon>
        <taxon>Chordata</taxon>
        <taxon>Craniata</taxon>
        <taxon>Vertebrata</taxon>
        <taxon>Euteleostomi</taxon>
        <taxon>Mammalia</taxon>
        <taxon>Eutheria</taxon>
        <taxon>Laurasiatheria</taxon>
        <taxon>Artiodactyla</taxon>
        <taxon>Ruminantia</taxon>
        <taxon>Pecora</taxon>
        <taxon>Bovidae</taxon>
        <taxon>Bovinae</taxon>
        <taxon>Bos</taxon>
    </lineage>
</organism>